<feature type="chain" id="PRO_0000208059" description="TBC domain-containing protein C4G8.04">
    <location>
        <begin position="1"/>
        <end position="772"/>
    </location>
</feature>
<feature type="domain" description="Rab-GAP TBC" evidence="1">
    <location>
        <begin position="504"/>
        <end position="693"/>
    </location>
</feature>
<feature type="region of interest" description="Disordered" evidence="2">
    <location>
        <begin position="143"/>
        <end position="163"/>
    </location>
</feature>
<feature type="region of interest" description="Disordered" evidence="2">
    <location>
        <begin position="275"/>
        <end position="294"/>
    </location>
</feature>
<feature type="compositionally biased region" description="Polar residues" evidence="2">
    <location>
        <begin position="143"/>
        <end position="161"/>
    </location>
</feature>
<feature type="compositionally biased region" description="Low complexity" evidence="2">
    <location>
        <begin position="275"/>
        <end position="291"/>
    </location>
</feature>
<feature type="modified residue" description="Phosphothreonine" evidence="3">
    <location>
        <position position="395"/>
    </location>
</feature>
<reference key="1">
    <citation type="journal article" date="2002" name="Nature">
        <title>The genome sequence of Schizosaccharomyces pombe.</title>
        <authorList>
            <person name="Wood V."/>
            <person name="Gwilliam R."/>
            <person name="Rajandream M.A."/>
            <person name="Lyne M.H."/>
            <person name="Lyne R."/>
            <person name="Stewart A."/>
            <person name="Sgouros J.G."/>
            <person name="Peat N."/>
            <person name="Hayles J."/>
            <person name="Baker S.G."/>
            <person name="Basham D."/>
            <person name="Bowman S."/>
            <person name="Brooks K."/>
            <person name="Brown D."/>
            <person name="Brown S."/>
            <person name="Chillingworth T."/>
            <person name="Churcher C.M."/>
            <person name="Collins M."/>
            <person name="Connor R."/>
            <person name="Cronin A."/>
            <person name="Davis P."/>
            <person name="Feltwell T."/>
            <person name="Fraser A."/>
            <person name="Gentles S."/>
            <person name="Goble A."/>
            <person name="Hamlin N."/>
            <person name="Harris D.E."/>
            <person name="Hidalgo J."/>
            <person name="Hodgson G."/>
            <person name="Holroyd S."/>
            <person name="Hornsby T."/>
            <person name="Howarth S."/>
            <person name="Huckle E.J."/>
            <person name="Hunt S."/>
            <person name="Jagels K."/>
            <person name="James K.D."/>
            <person name="Jones L."/>
            <person name="Jones M."/>
            <person name="Leather S."/>
            <person name="McDonald S."/>
            <person name="McLean J."/>
            <person name="Mooney P."/>
            <person name="Moule S."/>
            <person name="Mungall K.L."/>
            <person name="Murphy L.D."/>
            <person name="Niblett D."/>
            <person name="Odell C."/>
            <person name="Oliver K."/>
            <person name="O'Neil S."/>
            <person name="Pearson D."/>
            <person name="Quail M.A."/>
            <person name="Rabbinowitsch E."/>
            <person name="Rutherford K.M."/>
            <person name="Rutter S."/>
            <person name="Saunders D."/>
            <person name="Seeger K."/>
            <person name="Sharp S."/>
            <person name="Skelton J."/>
            <person name="Simmonds M.N."/>
            <person name="Squares R."/>
            <person name="Squares S."/>
            <person name="Stevens K."/>
            <person name="Taylor K."/>
            <person name="Taylor R.G."/>
            <person name="Tivey A."/>
            <person name="Walsh S.V."/>
            <person name="Warren T."/>
            <person name="Whitehead S."/>
            <person name="Woodward J.R."/>
            <person name="Volckaert G."/>
            <person name="Aert R."/>
            <person name="Robben J."/>
            <person name="Grymonprez B."/>
            <person name="Weltjens I."/>
            <person name="Vanstreels E."/>
            <person name="Rieger M."/>
            <person name="Schaefer M."/>
            <person name="Mueller-Auer S."/>
            <person name="Gabel C."/>
            <person name="Fuchs M."/>
            <person name="Duesterhoeft A."/>
            <person name="Fritzc C."/>
            <person name="Holzer E."/>
            <person name="Moestl D."/>
            <person name="Hilbert H."/>
            <person name="Borzym K."/>
            <person name="Langer I."/>
            <person name="Beck A."/>
            <person name="Lehrach H."/>
            <person name="Reinhardt R."/>
            <person name="Pohl T.M."/>
            <person name="Eger P."/>
            <person name="Zimmermann W."/>
            <person name="Wedler H."/>
            <person name="Wambutt R."/>
            <person name="Purnelle B."/>
            <person name="Goffeau A."/>
            <person name="Cadieu E."/>
            <person name="Dreano S."/>
            <person name="Gloux S."/>
            <person name="Lelaure V."/>
            <person name="Mottier S."/>
            <person name="Galibert F."/>
            <person name="Aves S.J."/>
            <person name="Xiang Z."/>
            <person name="Hunt C."/>
            <person name="Moore K."/>
            <person name="Hurst S.M."/>
            <person name="Lucas M."/>
            <person name="Rochet M."/>
            <person name="Gaillardin C."/>
            <person name="Tallada V.A."/>
            <person name="Garzon A."/>
            <person name="Thode G."/>
            <person name="Daga R.R."/>
            <person name="Cruzado L."/>
            <person name="Jimenez J."/>
            <person name="Sanchez M."/>
            <person name="del Rey F."/>
            <person name="Benito J."/>
            <person name="Dominguez A."/>
            <person name="Revuelta J.L."/>
            <person name="Moreno S."/>
            <person name="Armstrong J."/>
            <person name="Forsburg S.L."/>
            <person name="Cerutti L."/>
            <person name="Lowe T."/>
            <person name="McCombie W.R."/>
            <person name="Paulsen I."/>
            <person name="Potashkin J."/>
            <person name="Shpakovski G.V."/>
            <person name="Ussery D."/>
            <person name="Barrell B.G."/>
            <person name="Nurse P."/>
        </authorList>
    </citation>
    <scope>NUCLEOTIDE SEQUENCE [LARGE SCALE GENOMIC DNA]</scope>
    <source>
        <strain>972 / ATCC 24843</strain>
    </source>
</reference>
<reference key="2">
    <citation type="journal article" date="2008" name="J. Proteome Res.">
        <title>Phosphoproteome analysis of fission yeast.</title>
        <authorList>
            <person name="Wilson-Grady J.T."/>
            <person name="Villen J."/>
            <person name="Gygi S.P."/>
        </authorList>
    </citation>
    <scope>PHOSPHORYLATION [LARGE SCALE ANALYSIS] AT THR-395</scope>
    <scope>IDENTIFICATION BY MASS SPECTROMETRY</scope>
</reference>
<organism>
    <name type="scientific">Schizosaccharomyces pombe (strain 972 / ATCC 24843)</name>
    <name type="common">Fission yeast</name>
    <dbReference type="NCBI Taxonomy" id="284812"/>
    <lineage>
        <taxon>Eukaryota</taxon>
        <taxon>Fungi</taxon>
        <taxon>Dikarya</taxon>
        <taxon>Ascomycota</taxon>
        <taxon>Taphrinomycotina</taxon>
        <taxon>Schizosaccharomycetes</taxon>
        <taxon>Schizosaccharomycetales</taxon>
        <taxon>Schizosaccharomycetaceae</taxon>
        <taxon>Schizosaccharomyces</taxon>
    </lineage>
</organism>
<keyword id="KW-0597">Phosphoprotein</keyword>
<keyword id="KW-1185">Reference proteome</keyword>
<name>YAD4_SCHPO</name>
<protein>
    <recommendedName>
        <fullName>TBC domain-containing protein C4G8.04</fullName>
    </recommendedName>
</protein>
<accession>Q09830</accession>
<evidence type="ECO:0000255" key="1">
    <source>
        <dbReference type="PROSITE-ProRule" id="PRU00163"/>
    </source>
</evidence>
<evidence type="ECO:0000256" key="2">
    <source>
        <dbReference type="SAM" id="MobiDB-lite"/>
    </source>
</evidence>
<evidence type="ECO:0000269" key="3">
    <source>
    </source>
</evidence>
<dbReference type="EMBL" id="CU329670">
    <property type="protein sequence ID" value="CAA91205.1"/>
    <property type="molecule type" value="Genomic_DNA"/>
</dbReference>
<dbReference type="PIR" id="T38849">
    <property type="entry name" value="S62481"/>
</dbReference>
<dbReference type="RefSeq" id="NP_593064.1">
    <property type="nucleotide sequence ID" value="NM_001018462.2"/>
</dbReference>
<dbReference type="SMR" id="Q09830"/>
<dbReference type="BioGRID" id="279987">
    <property type="interactions" value="14"/>
</dbReference>
<dbReference type="STRING" id="284812.Q09830"/>
<dbReference type="iPTMnet" id="Q09830"/>
<dbReference type="PaxDb" id="4896-SPAC4G8.04.1"/>
<dbReference type="EnsemblFungi" id="SPAC4G8.04.1">
    <property type="protein sequence ID" value="SPAC4G8.04.1:pep"/>
    <property type="gene ID" value="SPAC4G8.04"/>
</dbReference>
<dbReference type="KEGG" id="spo:2543572"/>
<dbReference type="PomBase" id="SPAC4G8.04"/>
<dbReference type="VEuPathDB" id="FungiDB:SPAC4G8.04"/>
<dbReference type="eggNOG" id="KOG2058">
    <property type="taxonomic scope" value="Eukaryota"/>
</dbReference>
<dbReference type="HOGENOM" id="CLU_365307_0_0_1"/>
<dbReference type="InParanoid" id="Q09830"/>
<dbReference type="OMA" id="FHYESRE"/>
<dbReference type="Reactome" id="R-SPO-8854214">
    <property type="pathway name" value="TBC/RABGAPs"/>
</dbReference>
<dbReference type="PRO" id="PR:Q09830"/>
<dbReference type="Proteomes" id="UP000002485">
    <property type="component" value="Chromosome I"/>
</dbReference>
<dbReference type="GO" id="GO:0005096">
    <property type="term" value="F:GTPase activator activity"/>
    <property type="evidence" value="ECO:0000318"/>
    <property type="project" value="GO_Central"/>
</dbReference>
<dbReference type="GO" id="GO:0016192">
    <property type="term" value="P:vesicle-mediated transport"/>
    <property type="evidence" value="ECO:0000303"/>
    <property type="project" value="PomBase"/>
</dbReference>
<dbReference type="FunFam" id="1.10.8.270:FF:000026">
    <property type="entry name" value="TBC (Tre-2/Bub2/Cdc16) domain family"/>
    <property type="match status" value="1"/>
</dbReference>
<dbReference type="FunFam" id="1.10.472.80:FF:000046">
    <property type="entry name" value="TBC domain-containing protein"/>
    <property type="match status" value="1"/>
</dbReference>
<dbReference type="Gene3D" id="1.10.8.270">
    <property type="entry name" value="putative rabgap domain of human tbc1 domain family member 14 like domains"/>
    <property type="match status" value="1"/>
</dbReference>
<dbReference type="Gene3D" id="1.10.472.80">
    <property type="entry name" value="Ypt/Rab-GAP domain of gyp1p, domain 3"/>
    <property type="match status" value="1"/>
</dbReference>
<dbReference type="InterPro" id="IPR000195">
    <property type="entry name" value="Rab-GAP-TBC_dom"/>
</dbReference>
<dbReference type="InterPro" id="IPR035969">
    <property type="entry name" value="Rab-GAP_TBC_sf"/>
</dbReference>
<dbReference type="InterPro" id="IPR050302">
    <property type="entry name" value="Rab_GAP_TBC_domain"/>
</dbReference>
<dbReference type="PANTHER" id="PTHR47219">
    <property type="entry name" value="RAB GTPASE-ACTIVATING PROTEIN 1-LIKE"/>
    <property type="match status" value="1"/>
</dbReference>
<dbReference type="PANTHER" id="PTHR47219:SF20">
    <property type="entry name" value="TBC1 DOMAIN FAMILY MEMBER 2B"/>
    <property type="match status" value="1"/>
</dbReference>
<dbReference type="Pfam" id="PF00566">
    <property type="entry name" value="RabGAP-TBC"/>
    <property type="match status" value="1"/>
</dbReference>
<dbReference type="SMART" id="SM00164">
    <property type="entry name" value="TBC"/>
    <property type="match status" value="1"/>
</dbReference>
<dbReference type="SUPFAM" id="SSF47923">
    <property type="entry name" value="Ypt/Rab-GAP domain of gyp1p"/>
    <property type="match status" value="2"/>
</dbReference>
<dbReference type="PROSITE" id="PS50086">
    <property type="entry name" value="TBC_RABGAP"/>
    <property type="match status" value="1"/>
</dbReference>
<gene>
    <name type="ORF">SPAC4G8.04</name>
</gene>
<proteinExistence type="evidence at protein level"/>
<sequence length="772" mass="86233">MQPSVSDSSVYLSSAPTKPIASGSVATGIDSMPSKVDITPCDLLENSKSSAPLFVECNQESLHSIPGSLHLVPDASIERLIEKHGAVNLLRQLAKDVAERDSFISDLKFHFESREYVFRELLREHGLDPVLANTKLSQRHSASFFPSSQEPSIPENPSSLTGEKPHLYARIDSAINEPFTPSDRLSPSSLVPLLKLPALDHAVSSSSSSDLPSDPNSASYIASSKQKASSLKLTSSLKKFYSWTSSSSLQHTRENLHDSTSSLRDHDPSLLSSSKFFRSSPRCSTPSVSSTFVSATSEPEVETYSVSTKNSSSNKNLRSSLSKLLSTSNLNNKPLSLSSTAPSMPSIGSVELGNMIPKETQPPSMRNDWKDYLDNNSKEILDQFGFLQKRPSHDTPLCPEDIKLNQKQTLSFYESNYGLVDDFFGNELDGLNDSPLLLNKKDILLDMKESTRQKNWSLFFQRLYKKYKITDEDTIGLLGISSIGVKGRHGKKRWHKFRELVKNGVPLCYKAKVWLECSGAYQLHSPGYYEELLSRTDEVESASVAQIDMDINRTMAKNVFFGGKGPGIPKLRRILVAYSRHNPHIGYCQGMNVIGAFLLLLYASEEDAFYMLMSIIENVLPPKYFTPDLMTSRADQLVLKSFVKESLPEIYSHLELLGVDLDAISFHWFLSVYTDTLPTNISFRIFDMLFCDGYVCLFRVALTILKSLKQQILACNSSSAIYSFLSDLVQYSFQPDSFIKEAADRWSKLVTEKSIERKRNLAISSLNLAVNY</sequence>